<gene>
    <name type="primary">yadA</name>
    <name type="synonym">invA</name>
    <name type="synonym">yop1</name>
    <name type="synonym">yopA</name>
    <name type="ordered locus">pYV0013</name>
</gene>
<geneLocation type="plasmid">
    <name>pIB1</name>
</geneLocation>
<geneLocation type="plasmid">
    <name>pYV</name>
</geneLocation>
<name>YADA_YERPS</name>
<accession>P10858</accession>
<accession>Q663F4</accession>
<protein>
    <recommendedName>
        <fullName>Adhesin YadA</fullName>
    </recommendedName>
    <alternativeName>
        <fullName evidence="6">Type 5 secretion system autotransporter YadA</fullName>
    </alternativeName>
</protein>
<evidence type="ECO:0000250" key="1">
    <source>
        <dbReference type="UniProtKB" id="A1JUB7"/>
    </source>
</evidence>
<evidence type="ECO:0000250" key="2">
    <source>
        <dbReference type="UniProtKB" id="P0C2W0"/>
    </source>
</evidence>
<evidence type="ECO:0000255" key="3"/>
<evidence type="ECO:0000269" key="4">
    <source>
    </source>
</evidence>
<evidence type="ECO:0000269" key="5">
    <source>
    </source>
</evidence>
<evidence type="ECO:0000305" key="6"/>
<feature type="signal peptide" evidence="3">
    <location>
        <begin position="1"/>
        <end position="25"/>
    </location>
</feature>
<feature type="chain" id="PRO_0000022701" description="Adhesin YadA">
    <location>
        <begin position="26"/>
        <end position="432"/>
    </location>
</feature>
<feature type="transmembrane region" description="Beta stranded" evidence="1">
    <location>
        <begin position="379"/>
        <end position="389"/>
    </location>
</feature>
<feature type="transmembrane region" description="Beta stranded" evidence="1">
    <location>
        <begin position="393"/>
        <end position="404"/>
    </location>
</feature>
<feature type="transmembrane region" description="Beta stranded" evidence="1">
    <location>
        <begin position="411"/>
        <end position="417"/>
    </location>
</feature>
<feature type="transmembrane region" description="Beta stranded" evidence="1">
    <location>
        <begin position="421"/>
        <end position="432"/>
    </location>
</feature>
<feature type="region of interest" description="Surface exposed passenger domain" evidence="2">
    <location>
        <begin position="26"/>
        <end position="340"/>
    </location>
</feature>
<feature type="region of interest" description="Outer membrane translocation of the passenger domain" evidence="2">
    <location>
        <begin position="341"/>
        <end position="379"/>
    </location>
</feature>
<feature type="region of interest" description="Translocator domain" evidence="2">
    <location>
        <begin position="380"/>
        <end position="432"/>
    </location>
</feature>
<feature type="coiled-coil region" evidence="3">
    <location>
        <begin position="242"/>
        <end position="263"/>
    </location>
</feature>
<feature type="sequence variant" description="In strain: YPIII." evidence="6">
    <original>GLDARAKGIH</original>
    <variation>AGGLNARAKDPY</variation>
    <location>
        <begin position="95"/>
        <end position="104"/>
    </location>
</feature>
<feature type="sequence variant" description="In strain: YPIII." evidence="6">
    <original>A</original>
    <variation>S</variation>
    <location>
        <position position="124"/>
    </location>
</feature>
<feature type="sequence variant" description="In strain: YPIII." evidence="6">
    <original>L</original>
    <variation>H</variation>
    <location>
        <position position="209"/>
    </location>
</feature>
<feature type="sequence variant" description="In strain: YPIII." evidence="6">
    <original>KDN</original>
    <variation>EDT</variation>
    <location>
        <begin position="237"/>
        <end position="239"/>
    </location>
</feature>
<proteinExistence type="evidence at protein level"/>
<sequence>MTKDFKISVSAALISALFSSPYAFAEEPEDGNDGIPRLSAVQISPNVDPKLGVGLYPAKPILRQENPKLPPRGPQGPEKKRARLAEAIQPQVLGGLDARAKGIHSIAIGATAEAAKPAAVAVGAGSIATGVNSVAIGPLSKALGDSAVTYGASSTAQKDGVAIGARASASDTGVAVGFNSKVDAQNSVAIGHSSHVAADHGYSIAIGDLSKTDRENSVSIGHESLNRQLTHLAAGTKDNDAVNVAQLKKEMAETLENARKETLAQSNDVLDAAKKHSNSVARTTLETAEEHANKKSAEALVSAKVYADSNSSHTLKTANSYTDVTVSSSTKKAISESNQYTDHKFSQLDNRLDKLDKRVDKGLASSAALNSLFQPYGVGKVNFTAGVGGYRSSQALAIGSGYRVNESVALKAGVAYAGSSNVMYNASFNIEW</sequence>
<reference key="1">
    <citation type="journal article" date="1988" name="Nature">
        <title>Increased virulence of Yersinia pseudotuberculosis by two independent mutations.</title>
        <authorList>
            <person name="Rosqvist R."/>
            <person name="Skurnik M."/>
            <person name="Wolf-Watz H."/>
        </authorList>
    </citation>
    <scope>NUCLEOTIDE SEQUENCE [GENOMIC DNA]</scope>
    <source>
        <strain>YPIII / Serotype O:3</strain>
        <plasmid>pIB1</plasmid>
    </source>
</reference>
<reference key="2">
    <citation type="journal article" date="1989" name="Mol. Microbiol.">
        <title>Analysis of the yopA gene encoding the Yop1 virulence determinants of Yersinia spp.</title>
        <authorList>
            <person name="Skurnik M."/>
            <person name="Wolf-Watz H."/>
        </authorList>
    </citation>
    <scope>NUCLEOTIDE SEQUENCE [GENOMIC DNA]</scope>
    <source>
        <strain>YPIII / Serotype O:3</strain>
        <plasmid>pIB1</plasmid>
    </source>
</reference>
<reference key="3">
    <citation type="journal article" date="2004" name="Proc. Natl. Acad. Sci. U.S.A.">
        <title>Insights into the evolution of Yersinia pestis through whole-genome comparison with Yersinia pseudotuberculosis.</title>
        <authorList>
            <person name="Chain P.S.G."/>
            <person name="Carniel E."/>
            <person name="Larimer F.W."/>
            <person name="Lamerdin J."/>
            <person name="Stoutland P.O."/>
            <person name="Regala W.M."/>
            <person name="Georgescu A.M."/>
            <person name="Vergez L.M."/>
            <person name="Land M.L."/>
            <person name="Motin V.L."/>
            <person name="Brubaker R.R."/>
            <person name="Fowler J."/>
            <person name="Hinnebusch J."/>
            <person name="Marceau M."/>
            <person name="Medigue C."/>
            <person name="Simonet M."/>
            <person name="Chenal-Francisque V."/>
            <person name="Souza B."/>
            <person name="Dacheux D."/>
            <person name="Elliott J.M."/>
            <person name="Derbise A."/>
            <person name="Hauser L.J."/>
            <person name="Garcia E."/>
        </authorList>
    </citation>
    <scope>NUCLEOTIDE SEQUENCE [LARGE SCALE GENOMIC DNA]</scope>
    <source>
        <strain>IP32953</strain>
        <plasmid>pYV</plasmid>
    </source>
</reference>
<reference key="4">
    <citation type="journal article" date="1989" name="J. Bacteriol.">
        <title>Binding to collagen by Yersinia enterocolitica and Yersinia pseudotuberculosis: evidence for yopA-mediated and chromosomally encoded mechanisms.</title>
        <authorList>
            <person name="Emoedy L."/>
            <person name="Heesemann J."/>
            <person name="Wolf-Watz H."/>
            <person name="Skurnik M."/>
            <person name="Kapperud G."/>
            <person name="O'Toole P."/>
            <person name="Wadstroem T."/>
        </authorList>
    </citation>
    <scope>COLLAGEN-BINDING</scope>
    <source>
        <strain>YPIII / Serotype O:3</strain>
    </source>
</reference>
<reference key="5">
    <citation type="journal article" date="1992" name="J. Bacteriol.">
        <title>LcrF is the temperature-regulated activator of the yadA gene of Yersinia enterocolitica and Yersinia pseudotuberculosis.</title>
        <authorList>
            <person name="Skurnik M."/>
            <person name="Toivanen P."/>
        </authorList>
    </citation>
    <scope>INDUCTION</scope>
    <source>
        <strain>YPIII / Serotype O:3</strain>
    </source>
</reference>
<reference key="6">
    <citation type="journal article" date="2002" name="Infect. Immun.">
        <title>The YadA protein of Yersinia pseudotuberculosis mediates high-efficiency uptake into human cells under environmental conditions in which invasin is repressed.</title>
        <authorList>
            <person name="Eitel J."/>
            <person name="Dersch P."/>
        </authorList>
    </citation>
    <scope>FUNCTION</scope>
    <source>
        <strain>YPIII / Serotype O:3</strain>
    </source>
</reference>
<dbReference type="EMBL" id="X13883">
    <property type="protein sequence ID" value="CAA32088.1"/>
    <property type="molecule type" value="Genomic_DNA"/>
</dbReference>
<dbReference type="EMBL" id="BX936399">
    <property type="protein sequence ID" value="CAF25356.1"/>
    <property type="molecule type" value="Genomic_DNA"/>
</dbReference>
<dbReference type="PIR" id="S04534">
    <property type="entry name" value="S04534"/>
</dbReference>
<dbReference type="RefSeq" id="WP_011191362.1">
    <property type="nucleotide sequence ID" value="NC_006153.2"/>
</dbReference>
<dbReference type="SMR" id="P10858"/>
<dbReference type="KEGG" id="ypo:BZ17_4223"/>
<dbReference type="KEGG" id="yps:pYV0013"/>
<dbReference type="PATRIC" id="fig|273123.14.peg.4456"/>
<dbReference type="PHI-base" id="PHI:7901"/>
<dbReference type="Proteomes" id="UP000001011">
    <property type="component" value="Plasmid pYV"/>
</dbReference>
<dbReference type="GO" id="GO:0009279">
    <property type="term" value="C:cell outer membrane"/>
    <property type="evidence" value="ECO:0007669"/>
    <property type="project" value="UniProtKB-SubCell"/>
</dbReference>
<dbReference type="GO" id="GO:0009986">
    <property type="term" value="C:cell surface"/>
    <property type="evidence" value="ECO:0007669"/>
    <property type="project" value="UniProtKB-SubCell"/>
</dbReference>
<dbReference type="GO" id="GO:0005518">
    <property type="term" value="F:collagen binding"/>
    <property type="evidence" value="ECO:0007669"/>
    <property type="project" value="InterPro"/>
</dbReference>
<dbReference type="GO" id="GO:0007155">
    <property type="term" value="P:cell adhesion"/>
    <property type="evidence" value="ECO:0007669"/>
    <property type="project" value="UniProtKB-KW"/>
</dbReference>
<dbReference type="GO" id="GO:0015031">
    <property type="term" value="P:protein transport"/>
    <property type="evidence" value="ECO:0007669"/>
    <property type="project" value="UniProtKB-KW"/>
</dbReference>
<dbReference type="CDD" id="cd12820">
    <property type="entry name" value="LbR_YadA-like"/>
    <property type="match status" value="1"/>
</dbReference>
<dbReference type="Gene3D" id="3.30.1300.30">
    <property type="entry name" value="GSPII I/J protein-like"/>
    <property type="match status" value="1"/>
</dbReference>
<dbReference type="Gene3D" id="2.150.10.10">
    <property type="entry name" value="Serralysin-like metalloprotease, C-terminal"/>
    <property type="match status" value="1"/>
</dbReference>
<dbReference type="InterPro" id="IPR008640">
    <property type="entry name" value="Adhesin_Head_dom"/>
</dbReference>
<dbReference type="InterPro" id="IPR008635">
    <property type="entry name" value="Coiled_stalk_dom"/>
</dbReference>
<dbReference type="InterPro" id="IPR008126">
    <property type="entry name" value="OM_adhesion_Yersinia"/>
</dbReference>
<dbReference type="InterPro" id="IPR045584">
    <property type="entry name" value="Pilin-like"/>
</dbReference>
<dbReference type="InterPro" id="IPR011049">
    <property type="entry name" value="Serralysin-like_metalloprot_C"/>
</dbReference>
<dbReference type="InterPro" id="IPR005594">
    <property type="entry name" value="YadA_C"/>
</dbReference>
<dbReference type="NCBIfam" id="NF033478">
    <property type="entry name" value="YadA_autotrans"/>
    <property type="match status" value="1"/>
</dbReference>
<dbReference type="Pfam" id="PF03895">
    <property type="entry name" value="YadA_anchor"/>
    <property type="match status" value="1"/>
</dbReference>
<dbReference type="Pfam" id="PF05658">
    <property type="entry name" value="YadA_head"/>
    <property type="match status" value="4"/>
</dbReference>
<dbReference type="Pfam" id="PF05662">
    <property type="entry name" value="YadA_stalk"/>
    <property type="match status" value="1"/>
</dbReference>
<dbReference type="PRINTS" id="PR01756">
    <property type="entry name" value="OMADHESIN"/>
</dbReference>
<dbReference type="SUPFAM" id="SSF101967">
    <property type="entry name" value="Adhesin YadA, collagen-binding domain"/>
    <property type="match status" value="1"/>
</dbReference>
<dbReference type="SUPFAM" id="SSF54523">
    <property type="entry name" value="Pili subunits"/>
    <property type="match status" value="1"/>
</dbReference>
<organism>
    <name type="scientific">Yersinia pseudotuberculosis serotype I (strain IP32953)</name>
    <dbReference type="NCBI Taxonomy" id="273123"/>
    <lineage>
        <taxon>Bacteria</taxon>
        <taxon>Pseudomonadati</taxon>
        <taxon>Pseudomonadota</taxon>
        <taxon>Gammaproteobacteria</taxon>
        <taxon>Enterobacterales</taxon>
        <taxon>Yersiniaceae</taxon>
        <taxon>Yersinia</taxon>
    </lineage>
</organism>
<comment type="function">
    <text evidence="4">Collagen-binding outer membrane protein forming a fibrillar matrix on the bacterial cell surface. Promotes attachment to eukaryotic cells and after invasion, is the major adhesin in infected tissue. Constitutes an alternative uptake pathway under conditions in which invasin synthesis is repressed.</text>
</comment>
<comment type="subunit">
    <text evidence="2">Homotrimer.</text>
</comment>
<comment type="subcellular location">
    <subcellularLocation>
        <location evidence="2">Cell surface</location>
    </subcellularLocation>
    <subcellularLocation>
        <location evidence="2">Cell outer membrane</location>
    </subcellularLocation>
    <text evidence="2">The C-terminal translocator domain is localized in the outer membrane and the passenger domain is at the cell surface.</text>
</comment>
<comment type="induction">
    <text evidence="5">Induced at 37 degrees Celsius by the temperature-dependent transcriptional activator LcrF (VirF).</text>
</comment>
<comment type="domain">
    <text evidence="2">The signal peptide, cleaved at the inner membrane, guides the autotransporter protein to the periplasmic space. Then, insertion of the C-terminal translocator domain in the outer membrane forms a hydrophilic pore for the translocation of the passenger domain to the bacterial cell surface.</text>
</comment>
<comment type="similarity">
    <text evidence="6">Belongs to the autotransporter-2 (AT-2) (TC 1.B.40) family.</text>
</comment>
<keyword id="KW-0130">Cell adhesion</keyword>
<keyword id="KW-0998">Cell outer membrane</keyword>
<keyword id="KW-0175">Coiled coil</keyword>
<keyword id="KW-0472">Membrane</keyword>
<keyword id="KW-0614">Plasmid</keyword>
<keyword id="KW-0653">Protein transport</keyword>
<keyword id="KW-0732">Signal</keyword>
<keyword id="KW-0812">Transmembrane</keyword>
<keyword id="KW-1134">Transmembrane beta strand</keyword>
<keyword id="KW-0813">Transport</keyword>
<keyword id="KW-0843">Virulence</keyword>